<protein>
    <recommendedName>
        <fullName>Glutamyl-tRNA(Gln) amidotransferase subunit C</fullName>
        <shortName>Glu-ADT subunit C</shortName>
        <ecNumber evidence="1">6.3.5.-</ecNumber>
    </recommendedName>
</protein>
<gene>
    <name evidence="1" type="primary">gatC</name>
    <name type="ordered locus">VNG_0870G</name>
</gene>
<organism>
    <name type="scientific">Halobacterium salinarum (strain ATCC 700922 / JCM 11081 / NRC-1)</name>
    <name type="common">Halobacterium halobium</name>
    <dbReference type="NCBI Taxonomy" id="64091"/>
    <lineage>
        <taxon>Archaea</taxon>
        <taxon>Methanobacteriati</taxon>
        <taxon>Methanobacteriota</taxon>
        <taxon>Stenosarchaea group</taxon>
        <taxon>Halobacteria</taxon>
        <taxon>Halobacteriales</taxon>
        <taxon>Halobacteriaceae</taxon>
        <taxon>Halobacterium</taxon>
        <taxon>Halobacterium salinarum NRC-34001</taxon>
    </lineage>
</organism>
<evidence type="ECO:0000255" key="1">
    <source>
        <dbReference type="HAMAP-Rule" id="MF_00122"/>
    </source>
</evidence>
<evidence type="ECO:0000256" key="2">
    <source>
        <dbReference type="SAM" id="MobiDB-lite"/>
    </source>
</evidence>
<evidence type="ECO:0000305" key="3"/>
<name>GATC_HALSA</name>
<sequence>MTDAVDAEEIRHVADLARLRLDDEDVDTVVDHCGDILEHFERLEEVPEVDAEPELVNVMRADEIADSLDQDDALANAPETEDGRFKGPNVS</sequence>
<accession>Q9HR44</accession>
<dbReference type="EC" id="6.3.5.-" evidence="1"/>
<dbReference type="EMBL" id="AE004437">
    <property type="protein sequence ID" value="AAG19314.1"/>
    <property type="status" value="ALT_INIT"/>
    <property type="molecule type" value="Genomic_DNA"/>
</dbReference>
<dbReference type="PIR" id="F84243">
    <property type="entry name" value="F84243"/>
</dbReference>
<dbReference type="RefSeq" id="WP_012289242.1">
    <property type="nucleotide sequence ID" value="NC_002607.1"/>
</dbReference>
<dbReference type="SMR" id="Q9HR44"/>
<dbReference type="STRING" id="64091.VNG_0870G"/>
<dbReference type="PaxDb" id="64091-VNG_0870G"/>
<dbReference type="GeneID" id="89349286"/>
<dbReference type="KEGG" id="hal:VNG_0870G"/>
<dbReference type="PATRIC" id="fig|64091.14.peg.667"/>
<dbReference type="HOGENOM" id="CLU_105899_1_1_2"/>
<dbReference type="InParanoid" id="Q9HR44"/>
<dbReference type="OrthoDB" id="15210at2157"/>
<dbReference type="PhylomeDB" id="Q9HR44"/>
<dbReference type="Proteomes" id="UP000000554">
    <property type="component" value="Chromosome"/>
</dbReference>
<dbReference type="GO" id="GO:0050566">
    <property type="term" value="F:asparaginyl-tRNA synthase (glutamine-hydrolyzing) activity"/>
    <property type="evidence" value="ECO:0007669"/>
    <property type="project" value="RHEA"/>
</dbReference>
<dbReference type="GO" id="GO:0005524">
    <property type="term" value="F:ATP binding"/>
    <property type="evidence" value="ECO:0007669"/>
    <property type="project" value="UniProtKB-KW"/>
</dbReference>
<dbReference type="GO" id="GO:0050567">
    <property type="term" value="F:glutaminyl-tRNA synthase (glutamine-hydrolyzing) activity"/>
    <property type="evidence" value="ECO:0007669"/>
    <property type="project" value="UniProtKB-UniRule"/>
</dbReference>
<dbReference type="GO" id="GO:0070681">
    <property type="term" value="P:glutaminyl-tRNAGln biosynthesis via transamidation"/>
    <property type="evidence" value="ECO:0000318"/>
    <property type="project" value="GO_Central"/>
</dbReference>
<dbReference type="GO" id="GO:0006450">
    <property type="term" value="P:regulation of translational fidelity"/>
    <property type="evidence" value="ECO:0007669"/>
    <property type="project" value="InterPro"/>
</dbReference>
<dbReference type="GO" id="GO:0006412">
    <property type="term" value="P:translation"/>
    <property type="evidence" value="ECO:0007669"/>
    <property type="project" value="UniProtKB-UniRule"/>
</dbReference>
<dbReference type="Gene3D" id="1.10.20.60">
    <property type="entry name" value="Glu-tRNAGln amidotransferase C subunit, N-terminal domain"/>
    <property type="match status" value="1"/>
</dbReference>
<dbReference type="HAMAP" id="MF_00122">
    <property type="entry name" value="GatC"/>
    <property type="match status" value="1"/>
</dbReference>
<dbReference type="InterPro" id="IPR036113">
    <property type="entry name" value="Asp/Glu-ADT_sf_sub_c"/>
</dbReference>
<dbReference type="InterPro" id="IPR003837">
    <property type="entry name" value="GatC"/>
</dbReference>
<dbReference type="NCBIfam" id="TIGR00135">
    <property type="entry name" value="gatC"/>
    <property type="match status" value="1"/>
</dbReference>
<dbReference type="PANTHER" id="PTHR15004">
    <property type="entry name" value="GLUTAMYL-TRNA(GLN) AMIDOTRANSFERASE SUBUNIT C, MITOCHONDRIAL"/>
    <property type="match status" value="1"/>
</dbReference>
<dbReference type="PANTHER" id="PTHR15004:SF0">
    <property type="entry name" value="GLUTAMYL-TRNA(GLN) AMIDOTRANSFERASE SUBUNIT C, MITOCHONDRIAL"/>
    <property type="match status" value="1"/>
</dbReference>
<dbReference type="Pfam" id="PF02686">
    <property type="entry name" value="GatC"/>
    <property type="match status" value="1"/>
</dbReference>
<dbReference type="SUPFAM" id="SSF141000">
    <property type="entry name" value="Glu-tRNAGln amidotransferase C subunit"/>
    <property type="match status" value="1"/>
</dbReference>
<feature type="chain" id="PRO_0000105358" description="Glutamyl-tRNA(Gln) amidotransferase subunit C">
    <location>
        <begin position="1"/>
        <end position="91"/>
    </location>
</feature>
<feature type="region of interest" description="Disordered" evidence="2">
    <location>
        <begin position="68"/>
        <end position="91"/>
    </location>
</feature>
<proteinExistence type="inferred from homology"/>
<keyword id="KW-0067">ATP-binding</keyword>
<keyword id="KW-0436">Ligase</keyword>
<keyword id="KW-0547">Nucleotide-binding</keyword>
<keyword id="KW-0648">Protein biosynthesis</keyword>
<keyword id="KW-1185">Reference proteome</keyword>
<reference key="1">
    <citation type="journal article" date="2000" name="Proc. Natl. Acad. Sci. U.S.A.">
        <title>Genome sequence of Halobacterium species NRC-1.</title>
        <authorList>
            <person name="Ng W.V."/>
            <person name="Kennedy S.P."/>
            <person name="Mahairas G.G."/>
            <person name="Berquist B."/>
            <person name="Pan M."/>
            <person name="Shukla H.D."/>
            <person name="Lasky S.R."/>
            <person name="Baliga N.S."/>
            <person name="Thorsson V."/>
            <person name="Sbrogna J."/>
            <person name="Swartzell S."/>
            <person name="Weir D."/>
            <person name="Hall J."/>
            <person name="Dahl T.A."/>
            <person name="Welti R."/>
            <person name="Goo Y.A."/>
            <person name="Leithauser B."/>
            <person name="Keller K."/>
            <person name="Cruz R."/>
            <person name="Danson M.J."/>
            <person name="Hough D.W."/>
            <person name="Maddocks D.G."/>
            <person name="Jablonski P.E."/>
            <person name="Krebs M.P."/>
            <person name="Angevine C.M."/>
            <person name="Dale H."/>
            <person name="Isenbarger T.A."/>
            <person name="Peck R.F."/>
            <person name="Pohlschroder M."/>
            <person name="Spudich J.L."/>
            <person name="Jung K.-H."/>
            <person name="Alam M."/>
            <person name="Freitas T."/>
            <person name="Hou S."/>
            <person name="Daniels C.J."/>
            <person name="Dennis P.P."/>
            <person name="Omer A.D."/>
            <person name="Ebhardt H."/>
            <person name="Lowe T.M."/>
            <person name="Liang P."/>
            <person name="Riley M."/>
            <person name="Hood L."/>
            <person name="DasSarma S."/>
        </authorList>
    </citation>
    <scope>NUCLEOTIDE SEQUENCE [LARGE SCALE GENOMIC DNA]</scope>
    <source>
        <strain>ATCC 700922 / JCM 11081 / NRC-1</strain>
    </source>
</reference>
<comment type="function">
    <text evidence="1">Allows the formation of correctly charged Asn-tRNA(Asn) or Gln-tRNA(Gln) through the transamidation of misacylated Asp-tRNA(Asn) or Glu-tRNA(Gln) in organisms which lack either or both of asparaginyl-tRNA or glutaminyl-tRNA synthetases. The reaction takes place in the presence of glutamine and ATP through an activated phospho-Asp-tRNA(Asn) or phospho-Glu-tRNA(Gln).</text>
</comment>
<comment type="catalytic activity">
    <reaction evidence="1">
        <text>L-glutamyl-tRNA(Gln) + L-glutamine + ATP + H2O = L-glutaminyl-tRNA(Gln) + L-glutamate + ADP + phosphate + H(+)</text>
        <dbReference type="Rhea" id="RHEA:17521"/>
        <dbReference type="Rhea" id="RHEA-COMP:9681"/>
        <dbReference type="Rhea" id="RHEA-COMP:9684"/>
        <dbReference type="ChEBI" id="CHEBI:15377"/>
        <dbReference type="ChEBI" id="CHEBI:15378"/>
        <dbReference type="ChEBI" id="CHEBI:29985"/>
        <dbReference type="ChEBI" id="CHEBI:30616"/>
        <dbReference type="ChEBI" id="CHEBI:43474"/>
        <dbReference type="ChEBI" id="CHEBI:58359"/>
        <dbReference type="ChEBI" id="CHEBI:78520"/>
        <dbReference type="ChEBI" id="CHEBI:78521"/>
        <dbReference type="ChEBI" id="CHEBI:456216"/>
    </reaction>
</comment>
<comment type="catalytic activity">
    <reaction evidence="1">
        <text>L-aspartyl-tRNA(Asn) + L-glutamine + ATP + H2O = L-asparaginyl-tRNA(Asn) + L-glutamate + ADP + phosphate + 2 H(+)</text>
        <dbReference type="Rhea" id="RHEA:14513"/>
        <dbReference type="Rhea" id="RHEA-COMP:9674"/>
        <dbReference type="Rhea" id="RHEA-COMP:9677"/>
        <dbReference type="ChEBI" id="CHEBI:15377"/>
        <dbReference type="ChEBI" id="CHEBI:15378"/>
        <dbReference type="ChEBI" id="CHEBI:29985"/>
        <dbReference type="ChEBI" id="CHEBI:30616"/>
        <dbReference type="ChEBI" id="CHEBI:43474"/>
        <dbReference type="ChEBI" id="CHEBI:58359"/>
        <dbReference type="ChEBI" id="CHEBI:78515"/>
        <dbReference type="ChEBI" id="CHEBI:78516"/>
        <dbReference type="ChEBI" id="CHEBI:456216"/>
    </reaction>
</comment>
<comment type="subunit">
    <text evidence="1">Heterotrimer of A, B and C subunits.</text>
</comment>
<comment type="similarity">
    <text evidence="1">Belongs to the GatC family.</text>
</comment>
<comment type="sequence caution" evidence="3">
    <conflict type="erroneous initiation">
        <sequence resource="EMBL-CDS" id="AAG19314"/>
    </conflict>
</comment>